<comment type="function">
    <text evidence="1">Purine salvage pathway enzyme that catalyzes the transfer of the ribosyl-5-phosphate group from 5-phospho-alpha-D-ribose 1-diphosphate (PRPP) to the N9 position of the 6-oxopurines guanine and xanthine to form the corresponding ribonucleotides GMP (guanosine 5'-monophosphate) and XMP (xanthosine 5'-monophosphate), with the release of PPi. To a lesser extent, also acts on hypoxanthine.</text>
</comment>
<comment type="catalytic activity">
    <reaction evidence="1">
        <text>GMP + diphosphate = guanine + 5-phospho-alpha-D-ribose 1-diphosphate</text>
        <dbReference type="Rhea" id="RHEA:25424"/>
        <dbReference type="ChEBI" id="CHEBI:16235"/>
        <dbReference type="ChEBI" id="CHEBI:33019"/>
        <dbReference type="ChEBI" id="CHEBI:58017"/>
        <dbReference type="ChEBI" id="CHEBI:58115"/>
    </reaction>
    <physiologicalReaction direction="right-to-left" evidence="1">
        <dbReference type="Rhea" id="RHEA:25426"/>
    </physiologicalReaction>
</comment>
<comment type="catalytic activity">
    <reaction evidence="1">
        <text>XMP + diphosphate = xanthine + 5-phospho-alpha-D-ribose 1-diphosphate</text>
        <dbReference type="Rhea" id="RHEA:10800"/>
        <dbReference type="ChEBI" id="CHEBI:17712"/>
        <dbReference type="ChEBI" id="CHEBI:33019"/>
        <dbReference type="ChEBI" id="CHEBI:57464"/>
        <dbReference type="ChEBI" id="CHEBI:58017"/>
        <dbReference type="EC" id="2.4.2.22"/>
    </reaction>
    <physiologicalReaction direction="right-to-left" evidence="1">
        <dbReference type="Rhea" id="RHEA:10802"/>
    </physiologicalReaction>
</comment>
<comment type="catalytic activity">
    <reaction evidence="1">
        <text>IMP + diphosphate = hypoxanthine + 5-phospho-alpha-D-ribose 1-diphosphate</text>
        <dbReference type="Rhea" id="RHEA:17973"/>
        <dbReference type="ChEBI" id="CHEBI:17368"/>
        <dbReference type="ChEBI" id="CHEBI:33019"/>
        <dbReference type="ChEBI" id="CHEBI:58017"/>
        <dbReference type="ChEBI" id="CHEBI:58053"/>
    </reaction>
    <physiologicalReaction direction="right-to-left" evidence="1">
        <dbReference type="Rhea" id="RHEA:17975"/>
    </physiologicalReaction>
</comment>
<comment type="cofactor">
    <cofactor evidence="1">
        <name>Mg(2+)</name>
        <dbReference type="ChEBI" id="CHEBI:18420"/>
    </cofactor>
</comment>
<comment type="pathway">
    <text evidence="1">Purine metabolism; GMP biosynthesis via salvage pathway; GMP from guanine: step 1/1.</text>
</comment>
<comment type="pathway">
    <text evidence="1">Purine metabolism; XMP biosynthesis via salvage pathway; XMP from xanthine: step 1/1.</text>
</comment>
<comment type="subunit">
    <text evidence="1">Homotetramer.</text>
</comment>
<comment type="subcellular location">
    <subcellularLocation>
        <location evidence="1">Cell inner membrane</location>
        <topology evidence="1">Peripheral membrane protein</topology>
    </subcellularLocation>
</comment>
<comment type="similarity">
    <text evidence="1">Belongs to the purine/pyrimidine phosphoribosyltransferase family. XGPT subfamily.</text>
</comment>
<keyword id="KW-0997">Cell inner membrane</keyword>
<keyword id="KW-1003">Cell membrane</keyword>
<keyword id="KW-0328">Glycosyltransferase</keyword>
<keyword id="KW-0460">Magnesium</keyword>
<keyword id="KW-0472">Membrane</keyword>
<keyword id="KW-0479">Metal-binding</keyword>
<keyword id="KW-0660">Purine salvage</keyword>
<keyword id="KW-1185">Reference proteome</keyword>
<keyword id="KW-0808">Transferase</keyword>
<gene>
    <name evidence="1" type="primary">gpt</name>
    <name type="ordered locus">BAB1_1066</name>
</gene>
<reference key="1">
    <citation type="journal article" date="2005" name="Infect. Immun.">
        <title>Whole-genome analyses of speciation events in pathogenic Brucellae.</title>
        <authorList>
            <person name="Chain P.S."/>
            <person name="Comerci D.J."/>
            <person name="Tolmasky M.E."/>
            <person name="Larimer F.W."/>
            <person name="Malfatti S.A."/>
            <person name="Vergez L.M."/>
            <person name="Aguero F."/>
            <person name="Land M.L."/>
            <person name="Ugalde R.A."/>
            <person name="Garcia E."/>
        </authorList>
    </citation>
    <scope>NUCLEOTIDE SEQUENCE [LARGE SCALE GENOMIC DNA]</scope>
    <source>
        <strain>2308</strain>
    </source>
</reference>
<proteinExistence type="inferred from homology"/>
<accession>Q2YQ27</accession>
<organism>
    <name type="scientific">Brucella abortus (strain 2308)</name>
    <dbReference type="NCBI Taxonomy" id="359391"/>
    <lineage>
        <taxon>Bacteria</taxon>
        <taxon>Pseudomonadati</taxon>
        <taxon>Pseudomonadota</taxon>
        <taxon>Alphaproteobacteria</taxon>
        <taxon>Hyphomicrobiales</taxon>
        <taxon>Brucellaceae</taxon>
        <taxon>Brucella/Ochrobactrum group</taxon>
        <taxon>Brucella</taxon>
    </lineage>
</organism>
<sequence length="170" mass="18821">MSLPDKAFPVSWDQFHRDARALAWRIAGLDREWRAIVAITRGGLVPAAIICRELGIRLIETVCIASYHDYTSQGEMQVLKGIGASLLENQGEGVIVVDDLTDTGKTAAIVREMMPRAHFATVYAKPKGRPLIDTLRHGGLTGYLDLFPMGYGLHLSGADCWRKTRLNETK</sequence>
<dbReference type="EC" id="2.4.2.-" evidence="1"/>
<dbReference type="EC" id="2.4.2.22" evidence="1"/>
<dbReference type="EMBL" id="AM040264">
    <property type="protein sequence ID" value="CAJ11022.1"/>
    <property type="molecule type" value="Genomic_DNA"/>
</dbReference>
<dbReference type="RefSeq" id="WP_002964164.1">
    <property type="nucleotide sequence ID" value="NZ_KN046823.1"/>
</dbReference>
<dbReference type="SMR" id="Q2YQ27"/>
<dbReference type="STRING" id="359391.BAB1_1066"/>
<dbReference type="GeneID" id="93016605"/>
<dbReference type="KEGG" id="bmf:BAB1_1066"/>
<dbReference type="PATRIC" id="fig|359391.11.peg.1778"/>
<dbReference type="HOGENOM" id="CLU_080904_3_0_5"/>
<dbReference type="UniPathway" id="UPA00602">
    <property type="reaction ID" value="UER00658"/>
</dbReference>
<dbReference type="UniPathway" id="UPA00909">
    <property type="reaction ID" value="UER00887"/>
</dbReference>
<dbReference type="Proteomes" id="UP000002719">
    <property type="component" value="Chromosome I"/>
</dbReference>
<dbReference type="GO" id="GO:0005886">
    <property type="term" value="C:plasma membrane"/>
    <property type="evidence" value="ECO:0007669"/>
    <property type="project" value="UniProtKB-SubCell"/>
</dbReference>
<dbReference type="GO" id="GO:0052657">
    <property type="term" value="F:guanine phosphoribosyltransferase activity"/>
    <property type="evidence" value="ECO:0007669"/>
    <property type="project" value="RHEA"/>
</dbReference>
<dbReference type="GO" id="GO:0004422">
    <property type="term" value="F:hypoxanthine phosphoribosyltransferase activity"/>
    <property type="evidence" value="ECO:0007669"/>
    <property type="project" value="RHEA"/>
</dbReference>
<dbReference type="GO" id="GO:0000287">
    <property type="term" value="F:magnesium ion binding"/>
    <property type="evidence" value="ECO:0007669"/>
    <property type="project" value="UniProtKB-UniRule"/>
</dbReference>
<dbReference type="GO" id="GO:0000310">
    <property type="term" value="F:xanthine phosphoribosyltransferase activity"/>
    <property type="evidence" value="ECO:0007669"/>
    <property type="project" value="UniProtKB-UniRule"/>
</dbReference>
<dbReference type="GO" id="GO:0032263">
    <property type="term" value="P:GMP salvage"/>
    <property type="evidence" value="ECO:0007669"/>
    <property type="project" value="UniProtKB-UniRule"/>
</dbReference>
<dbReference type="GO" id="GO:0006166">
    <property type="term" value="P:purine ribonucleoside salvage"/>
    <property type="evidence" value="ECO:0007669"/>
    <property type="project" value="UniProtKB-KW"/>
</dbReference>
<dbReference type="GO" id="GO:0032265">
    <property type="term" value="P:XMP salvage"/>
    <property type="evidence" value="ECO:0007669"/>
    <property type="project" value="UniProtKB-UniRule"/>
</dbReference>
<dbReference type="CDD" id="cd06223">
    <property type="entry name" value="PRTases_typeI"/>
    <property type="match status" value="1"/>
</dbReference>
<dbReference type="Gene3D" id="3.40.50.2020">
    <property type="match status" value="1"/>
</dbReference>
<dbReference type="HAMAP" id="MF_01903">
    <property type="entry name" value="XGPRT"/>
    <property type="match status" value="1"/>
</dbReference>
<dbReference type="InterPro" id="IPR000836">
    <property type="entry name" value="PRibTrfase_dom"/>
</dbReference>
<dbReference type="InterPro" id="IPR029057">
    <property type="entry name" value="PRTase-like"/>
</dbReference>
<dbReference type="InterPro" id="IPR023747">
    <property type="entry name" value="Xanthine_Guanine_PRibTrfase"/>
</dbReference>
<dbReference type="NCBIfam" id="NF006613">
    <property type="entry name" value="PRK09177.1"/>
    <property type="match status" value="1"/>
</dbReference>
<dbReference type="PANTHER" id="PTHR39563">
    <property type="entry name" value="XANTHINE PHOSPHORIBOSYLTRANSFERASE"/>
    <property type="match status" value="1"/>
</dbReference>
<dbReference type="PANTHER" id="PTHR39563:SF1">
    <property type="entry name" value="XANTHINE-GUANINE PHOSPHORIBOSYLTRANSFERASE"/>
    <property type="match status" value="1"/>
</dbReference>
<dbReference type="Pfam" id="PF00156">
    <property type="entry name" value="Pribosyltran"/>
    <property type="match status" value="1"/>
</dbReference>
<dbReference type="SUPFAM" id="SSF53271">
    <property type="entry name" value="PRTase-like"/>
    <property type="match status" value="1"/>
</dbReference>
<evidence type="ECO:0000255" key="1">
    <source>
        <dbReference type="HAMAP-Rule" id="MF_01903"/>
    </source>
</evidence>
<protein>
    <recommendedName>
        <fullName evidence="1">Xanthine-guanine phosphoribosyltransferase</fullName>
        <shortName evidence="1">XGPRT</shortName>
        <ecNumber evidence="1">2.4.2.-</ecNumber>
        <ecNumber evidence="1">2.4.2.22</ecNumber>
    </recommendedName>
    <alternativeName>
        <fullName evidence="1">Xanthine phosphoribosyltransferase</fullName>
    </alternativeName>
</protein>
<feature type="chain" id="PRO_0000261003" description="Xanthine-guanine phosphoribosyltransferase">
    <location>
        <begin position="1"/>
        <end position="170"/>
    </location>
</feature>
<feature type="binding site" evidence="1">
    <location>
        <begin position="41"/>
        <end position="42"/>
    </location>
    <ligand>
        <name>5-phospho-alpha-D-ribose 1-diphosphate</name>
        <dbReference type="ChEBI" id="CHEBI:58017"/>
    </ligand>
</feature>
<feature type="binding site" evidence="1">
    <location>
        <begin position="98"/>
        <end position="106"/>
    </location>
    <ligand>
        <name>5-phospho-alpha-D-ribose 1-diphosphate</name>
        <dbReference type="ChEBI" id="CHEBI:58017"/>
    </ligand>
</feature>
<feature type="binding site" evidence="1">
    <location>
        <position position="99"/>
    </location>
    <ligand>
        <name>Mg(2+)</name>
        <dbReference type="ChEBI" id="CHEBI:18420"/>
    </ligand>
</feature>
<feature type="binding site" evidence="1">
    <location>
        <begin position="102"/>
        <end position="106"/>
    </location>
    <ligand>
        <name>GMP</name>
        <dbReference type="ChEBI" id="CHEBI:58115"/>
    </ligand>
</feature>
<feature type="binding site" evidence="1">
    <location>
        <position position="102"/>
    </location>
    <ligand>
        <name>guanine</name>
        <dbReference type="ChEBI" id="CHEBI:16235"/>
    </ligand>
</feature>
<feature type="binding site" evidence="1">
    <location>
        <position position="102"/>
    </location>
    <ligand>
        <name>xanthine</name>
        <dbReference type="ChEBI" id="CHEBI:17712"/>
    </ligand>
</feature>
<name>XGPT_BRUA2</name>